<comment type="function">
    <text evidence="3 4 5 6">Truncated and inactivated form of SCRA, a protein involved in male-mediated self-incompatibility when active. Most A.thaliana cultivars contain such an inactive form and thus, are self-fertiles.</text>
</comment>
<comment type="subcellular location">
    <subcellularLocation>
        <location evidence="1">Secreted</location>
    </subcellularLocation>
</comment>
<comment type="miscellaneous">
    <text>By contrast to A.lyrata and A.halleri, self-incompatible species with full-length SCRA isoforms, A.thaliana is self-compatible with impaired SCRA protein.</text>
</comment>
<comment type="similarity">
    <text evidence="7">Belongs to the DEFL family.</text>
</comment>
<comment type="online information" name="Protein Spotlight">
    <link uri="https://www.proteinspotlight.org/back_issues/128"/>
    <text>Do it yourself - Issue 128 of May 2011</text>
</comment>
<accession>P0CG07</accession>
<name>SCRA_ARATH</name>
<proteinExistence type="evidence at protein level"/>
<feature type="signal peptide" evidence="2">
    <location>
        <begin position="1"/>
        <end position="26"/>
    </location>
</feature>
<feature type="chain" id="PRO_0000394667" description="Defensin-like protein A">
    <location>
        <begin position="27"/>
        <end position="62"/>
    </location>
</feature>
<feature type="disulfide bond" evidence="1">
    <location>
        <begin position="42"/>
        <end position="52"/>
    </location>
</feature>
<feature type="mutagenesis site" description="Confers male-driven self-incompatibility." evidence="6">
    <original>DAKKTLA</original>
    <variation>IAKNFRPSRPFECNCQTFDKGGICYCKKCLV</variation>
    <location>
        <begin position="56"/>
        <end position="62"/>
    </location>
</feature>
<protein>
    <recommendedName>
        <fullName>Defensin-like protein A</fullName>
        <shortName>AtSCRA</shortName>
    </recommendedName>
    <alternativeName>
        <fullName>S locus cysteine-rich-like protein A</fullName>
    </alternativeName>
    <alternativeName>
        <fullName>S locus protein 11</fullName>
    </alternativeName>
</protein>
<sequence>MRCVVLFMVSCLLIVLLINHFEEVEAQKWNKCFLRDIFPGKCEHDANAKLRCKEDDAKKTLA</sequence>
<reference key="1">
    <citation type="journal article" date="2010" name="Nature">
        <title>Evolution of self-compatibility in Arabidopsis by a mutation in the male specificity gene.</title>
        <authorList>
            <person name="Tsuchimatsu T."/>
            <person name="Suwabe K."/>
            <person name="Shimizu-Inatsugi R."/>
            <person name="Isokawa S."/>
            <person name="Pavlidis P."/>
            <person name="Stadler T."/>
            <person name="Suzuki G."/>
            <person name="Takayama S."/>
            <person name="Watanabe M."/>
            <person name="Shimizu K.K."/>
        </authorList>
    </citation>
    <scope>NUCLEOTIDE SEQUENCE [GENOMIC DNA / MRNA]</scope>
    <scope>FUNCTION</scope>
    <scope>MUTAGENESIS OF 56-ASP--ALA-62</scope>
    <source>
        <strain>cv. Columbia</strain>
    </source>
</reference>
<reference key="2">
    <citation type="journal article" date="1999" name="Nature">
        <title>Sequence and analysis of chromosome 4 of the plant Arabidopsis thaliana.</title>
        <authorList>
            <person name="Mayer K.F.X."/>
            <person name="Schueller C."/>
            <person name="Wambutt R."/>
            <person name="Murphy G."/>
            <person name="Volckaert G."/>
            <person name="Pohl T."/>
            <person name="Duesterhoeft A."/>
            <person name="Stiekema W."/>
            <person name="Entian K.-D."/>
            <person name="Terryn N."/>
            <person name="Harris B."/>
            <person name="Ansorge W."/>
            <person name="Brandt P."/>
            <person name="Grivell L.A."/>
            <person name="Rieger M."/>
            <person name="Weichselgartner M."/>
            <person name="de Simone V."/>
            <person name="Obermaier B."/>
            <person name="Mache R."/>
            <person name="Mueller M."/>
            <person name="Kreis M."/>
            <person name="Delseny M."/>
            <person name="Puigdomenech P."/>
            <person name="Watson M."/>
            <person name="Schmidtheini T."/>
            <person name="Reichert B."/>
            <person name="Portetelle D."/>
            <person name="Perez-Alonso M."/>
            <person name="Boutry M."/>
            <person name="Bancroft I."/>
            <person name="Vos P."/>
            <person name="Hoheisel J."/>
            <person name="Zimmermann W."/>
            <person name="Wedler H."/>
            <person name="Ridley P."/>
            <person name="Langham S.-A."/>
            <person name="McCullagh B."/>
            <person name="Bilham L."/>
            <person name="Robben J."/>
            <person name="van der Schueren J."/>
            <person name="Grymonprez B."/>
            <person name="Chuang Y.-J."/>
            <person name="Vandenbussche F."/>
            <person name="Braeken M."/>
            <person name="Weltjens I."/>
            <person name="Voet M."/>
            <person name="Bastiaens I."/>
            <person name="Aert R."/>
            <person name="Defoor E."/>
            <person name="Weitzenegger T."/>
            <person name="Bothe G."/>
            <person name="Ramsperger U."/>
            <person name="Hilbert H."/>
            <person name="Braun M."/>
            <person name="Holzer E."/>
            <person name="Brandt A."/>
            <person name="Peters S."/>
            <person name="van Staveren M."/>
            <person name="Dirkse W."/>
            <person name="Mooijman P."/>
            <person name="Klein Lankhorst R."/>
            <person name="Rose M."/>
            <person name="Hauf J."/>
            <person name="Koetter P."/>
            <person name="Berneiser S."/>
            <person name="Hempel S."/>
            <person name="Feldpausch M."/>
            <person name="Lamberth S."/>
            <person name="Van den Daele H."/>
            <person name="De Keyser A."/>
            <person name="Buysshaert C."/>
            <person name="Gielen J."/>
            <person name="Villarroel R."/>
            <person name="De Clercq R."/>
            <person name="van Montagu M."/>
            <person name="Rogers J."/>
            <person name="Cronin A."/>
            <person name="Quail M.A."/>
            <person name="Bray-Allen S."/>
            <person name="Clark L."/>
            <person name="Doggett J."/>
            <person name="Hall S."/>
            <person name="Kay M."/>
            <person name="Lennard N."/>
            <person name="McLay K."/>
            <person name="Mayes R."/>
            <person name="Pettett A."/>
            <person name="Rajandream M.A."/>
            <person name="Lyne M."/>
            <person name="Benes V."/>
            <person name="Rechmann S."/>
            <person name="Borkova D."/>
            <person name="Bloecker H."/>
            <person name="Scharfe M."/>
            <person name="Grimm M."/>
            <person name="Loehnert T.-H."/>
            <person name="Dose S."/>
            <person name="de Haan M."/>
            <person name="Maarse A.C."/>
            <person name="Schaefer M."/>
            <person name="Mueller-Auer S."/>
            <person name="Gabel C."/>
            <person name="Fuchs M."/>
            <person name="Fartmann B."/>
            <person name="Granderath K."/>
            <person name="Dauner D."/>
            <person name="Herzl A."/>
            <person name="Neumann S."/>
            <person name="Argiriou A."/>
            <person name="Vitale D."/>
            <person name="Liguori R."/>
            <person name="Piravandi E."/>
            <person name="Massenet O."/>
            <person name="Quigley F."/>
            <person name="Clabauld G."/>
            <person name="Muendlein A."/>
            <person name="Felber R."/>
            <person name="Schnabl S."/>
            <person name="Hiller R."/>
            <person name="Schmidt W."/>
            <person name="Lecharny A."/>
            <person name="Aubourg S."/>
            <person name="Chefdor F."/>
            <person name="Cooke R."/>
            <person name="Berger C."/>
            <person name="Monfort A."/>
            <person name="Casacuberta E."/>
            <person name="Gibbons T."/>
            <person name="Weber N."/>
            <person name="Vandenbol M."/>
            <person name="Bargues M."/>
            <person name="Terol J."/>
            <person name="Torres A."/>
            <person name="Perez-Perez A."/>
            <person name="Purnelle B."/>
            <person name="Bent E."/>
            <person name="Johnson S."/>
            <person name="Tacon D."/>
            <person name="Jesse T."/>
            <person name="Heijnen L."/>
            <person name="Schwarz S."/>
            <person name="Scholler P."/>
            <person name="Heber S."/>
            <person name="Francs P."/>
            <person name="Bielke C."/>
            <person name="Frishman D."/>
            <person name="Haase D."/>
            <person name="Lemcke K."/>
            <person name="Mewes H.-W."/>
            <person name="Stocker S."/>
            <person name="Zaccaria P."/>
            <person name="Bevan M."/>
            <person name="Wilson R.K."/>
            <person name="de la Bastide M."/>
            <person name="Habermann K."/>
            <person name="Parnell L."/>
            <person name="Dedhia N."/>
            <person name="Gnoj L."/>
            <person name="Schutz K."/>
            <person name="Huang E."/>
            <person name="Spiegel L."/>
            <person name="Sekhon M."/>
            <person name="Murray J."/>
            <person name="Sheet P."/>
            <person name="Cordes M."/>
            <person name="Abu-Threideh J."/>
            <person name="Stoneking T."/>
            <person name="Kalicki J."/>
            <person name="Graves T."/>
            <person name="Harmon G."/>
            <person name="Edwards J."/>
            <person name="Latreille P."/>
            <person name="Courtney L."/>
            <person name="Cloud J."/>
            <person name="Abbott A."/>
            <person name="Scott K."/>
            <person name="Johnson D."/>
            <person name="Minx P."/>
            <person name="Bentley D."/>
            <person name="Fulton B."/>
            <person name="Miller N."/>
            <person name="Greco T."/>
            <person name="Kemp K."/>
            <person name="Kramer J."/>
            <person name="Fulton L."/>
            <person name="Mardis E."/>
            <person name="Dante M."/>
            <person name="Pepin K."/>
            <person name="Hillier L.W."/>
            <person name="Nelson J."/>
            <person name="Spieth J."/>
            <person name="Ryan E."/>
            <person name="Andrews S."/>
            <person name="Geisel C."/>
            <person name="Layman D."/>
            <person name="Du H."/>
            <person name="Ali J."/>
            <person name="Berghoff A."/>
            <person name="Jones K."/>
            <person name="Drone K."/>
            <person name="Cotton M."/>
            <person name="Joshu C."/>
            <person name="Antonoiu B."/>
            <person name="Zidanic M."/>
            <person name="Strong C."/>
            <person name="Sun H."/>
            <person name="Lamar B."/>
            <person name="Yordan C."/>
            <person name="Ma P."/>
            <person name="Zhong J."/>
            <person name="Preston R."/>
            <person name="Vil D."/>
            <person name="Shekher M."/>
            <person name="Matero A."/>
            <person name="Shah R."/>
            <person name="Swaby I.K."/>
            <person name="O'Shaughnessy A."/>
            <person name="Rodriguez M."/>
            <person name="Hoffman J."/>
            <person name="Till S."/>
            <person name="Granat S."/>
            <person name="Shohdy N."/>
            <person name="Hasegawa A."/>
            <person name="Hameed A."/>
            <person name="Lodhi M."/>
            <person name="Johnson A."/>
            <person name="Chen E."/>
            <person name="Marra M.A."/>
            <person name="Martienssen R."/>
            <person name="McCombie W.R."/>
        </authorList>
    </citation>
    <scope>NUCLEOTIDE SEQUENCE [LARGE SCALE GENOMIC DNA]</scope>
    <source>
        <strain>cv. Columbia</strain>
    </source>
</reference>
<reference key="3">
    <citation type="journal article" date="2017" name="Plant J.">
        <title>Araport11: a complete reannotation of the Arabidopsis thaliana reference genome.</title>
        <authorList>
            <person name="Cheng C.Y."/>
            <person name="Krishnakumar V."/>
            <person name="Chan A.P."/>
            <person name="Thibaud-Nissen F."/>
            <person name="Schobel S."/>
            <person name="Town C.D."/>
        </authorList>
    </citation>
    <scope>GENOME REANNOTATION</scope>
    <source>
        <strain>cv. Columbia</strain>
    </source>
</reference>
<reference key="4">
    <citation type="journal article" date="2004" name="Proc. Natl. Acad. Sci. U.S.A.">
        <title>Natural variation in expression of self-incompatibility in Arabidopsis thaliana: implications for the evolution of selfing.</title>
        <authorList>
            <person name="Nasrallah M.E."/>
            <person name="Liu P."/>
            <person name="Sherman-Broyles S."/>
            <person name="Boggs N.A."/>
            <person name="Nasrallah J.B."/>
        </authorList>
    </citation>
    <scope>FUNCTION</scope>
</reference>
<reference key="5">
    <citation type="journal article" date="2006" name="Mol. Biol. Evol.">
        <title>The transition to self-compatibility in Arabidopsis thaliana and evolution within S-haplotypes over 10 Myr.</title>
        <authorList>
            <person name="Bechsgaard J.S."/>
            <person name="Castric V."/>
            <person name="Charlesworth D."/>
            <person name="Vekemans X."/>
            <person name="Schierup M.H."/>
        </authorList>
    </citation>
    <scope>FUNCTION</scope>
</reference>
<reference key="6">
    <citation type="journal article" date="2009" name="PLoS Genet.">
        <title>Independent S-locus mutations caused self-fertility in Arabidopsis thaliana.</title>
        <authorList>
            <person name="Boggs N.A."/>
            <person name="Nasrallah J.B."/>
            <person name="Nasrallah M.E."/>
        </authorList>
    </citation>
    <scope>FUNCTION</scope>
</reference>
<keyword id="KW-1015">Disulfide bond</keyword>
<keyword id="KW-1185">Reference proteome</keyword>
<keyword id="KW-0964">Secreted</keyword>
<keyword id="KW-0713">Self-incompatibility</keyword>
<keyword id="KW-0732">Signal</keyword>
<dbReference type="EMBL" id="AL031187">
    <property type="status" value="NOT_ANNOTATED_CDS"/>
    <property type="molecule type" value="Genomic_DNA"/>
</dbReference>
<dbReference type="EMBL" id="CP002687">
    <property type="status" value="NOT_ANNOTATED_CDS"/>
    <property type="molecule type" value="Genomic_DNA"/>
</dbReference>
<dbReference type="STRING" id="3702.P0CG07"/>
<dbReference type="Araport" id="AT4G21364"/>
<dbReference type="TAIR" id="AT4G21364"/>
<dbReference type="InParanoid" id="P0CG07"/>
<dbReference type="PRO" id="PR:P0CG07"/>
<dbReference type="Proteomes" id="UP000006548">
    <property type="component" value="Chromosome 4"/>
</dbReference>
<dbReference type="GO" id="GO:0005576">
    <property type="term" value="C:extracellular region"/>
    <property type="evidence" value="ECO:0007669"/>
    <property type="project" value="UniProtKB-SubCell"/>
</dbReference>
<dbReference type="GO" id="GO:0060320">
    <property type="term" value="P:rejection of self pollen"/>
    <property type="evidence" value="ECO:0007669"/>
    <property type="project" value="UniProtKB-KW"/>
</dbReference>
<dbReference type="GO" id="GO:0007165">
    <property type="term" value="P:signal transduction"/>
    <property type="evidence" value="ECO:0007669"/>
    <property type="project" value="InterPro"/>
</dbReference>
<dbReference type="InterPro" id="IPR010682">
    <property type="entry name" value="SCRL"/>
</dbReference>
<dbReference type="Pfam" id="PF06876">
    <property type="entry name" value="SCRL"/>
    <property type="match status" value="1"/>
</dbReference>
<gene>
    <name type="primary">SCRA</name>
    <name type="synonym">SCR1</name>
    <name type="synonym">SP11</name>
    <name type="ordered locus">At4g21364</name>
    <name type="ORF">T6K22</name>
</gene>
<organism>
    <name type="scientific">Arabidopsis thaliana</name>
    <name type="common">Mouse-ear cress</name>
    <dbReference type="NCBI Taxonomy" id="3702"/>
    <lineage>
        <taxon>Eukaryota</taxon>
        <taxon>Viridiplantae</taxon>
        <taxon>Streptophyta</taxon>
        <taxon>Embryophyta</taxon>
        <taxon>Tracheophyta</taxon>
        <taxon>Spermatophyta</taxon>
        <taxon>Magnoliopsida</taxon>
        <taxon>eudicotyledons</taxon>
        <taxon>Gunneridae</taxon>
        <taxon>Pentapetalae</taxon>
        <taxon>rosids</taxon>
        <taxon>malvids</taxon>
        <taxon>Brassicales</taxon>
        <taxon>Brassicaceae</taxon>
        <taxon>Camelineae</taxon>
        <taxon>Arabidopsis</taxon>
    </lineage>
</organism>
<evidence type="ECO:0000250" key="1"/>
<evidence type="ECO:0000255" key="2"/>
<evidence type="ECO:0000269" key="3">
    <source>
    </source>
</evidence>
<evidence type="ECO:0000269" key="4">
    <source>
    </source>
</evidence>
<evidence type="ECO:0000269" key="5">
    <source>
    </source>
</evidence>
<evidence type="ECO:0000269" key="6">
    <source>
    </source>
</evidence>
<evidence type="ECO:0000305" key="7"/>